<protein>
    <recommendedName>
        <fullName evidence="3">Thrombospondin type-1 domain-containing protein 8</fullName>
    </recommendedName>
</protein>
<sequence length="115" mass="13152">MARTPGALLLAPLLLLQLATPALVYQDYQYLGQQGEGDSWEQLRLQHLKEVEDSILGPWGKWRCLCDLGKQERSREVVGTAPGPVFMDPEKLIQLRPCRQRDCPSCKPFDCDWRL</sequence>
<dbReference type="EMBL" id="AC018761">
    <property type="status" value="NOT_ANNOTATED_CDS"/>
    <property type="molecule type" value="Genomic_DNA"/>
</dbReference>
<dbReference type="EMBL" id="AC020934">
    <property type="status" value="NOT_ANNOTATED_CDS"/>
    <property type="molecule type" value="Genomic_DNA"/>
</dbReference>
<dbReference type="CCDS" id="CCDS92529.1"/>
<dbReference type="RefSeq" id="NP_001373729.1">
    <property type="nucleotide sequence ID" value="NM_001386800.1"/>
</dbReference>
<dbReference type="FunCoup" id="A0A1W2PP97">
    <property type="interactions" value="1"/>
</dbReference>
<dbReference type="BioMuta" id="ENSG00000284491"/>
<dbReference type="MassIVE" id="A0A1W2PP97"/>
<dbReference type="Ensembl" id="ENST00000639767.2">
    <property type="protein sequence ID" value="ENSP00000491410.2"/>
    <property type="gene ID" value="ENSG00000284491.3"/>
</dbReference>
<dbReference type="Ensembl" id="ENST00000639810.3">
    <property type="protein sequence ID" value="ENSP00000491231.1"/>
    <property type="gene ID" value="ENSG00000284491.3"/>
</dbReference>
<dbReference type="GeneID" id="111644133"/>
<dbReference type="MANE-Select" id="ENST00000639810.3">
    <property type="protein sequence ID" value="ENSP00000491231.1"/>
    <property type="RefSeq nucleotide sequence ID" value="NM_001386800.1"/>
    <property type="RefSeq protein sequence ID" value="NP_001373729.1"/>
</dbReference>
<dbReference type="AGR" id="HGNC:53785"/>
<dbReference type="GeneCards" id="THSD8"/>
<dbReference type="HGNC" id="HGNC:53785">
    <property type="gene designation" value="THSD8"/>
</dbReference>
<dbReference type="HPA" id="ENSG00000284491">
    <property type="expression patterns" value="Tissue enriched (testis)"/>
</dbReference>
<dbReference type="neXtProt" id="NX_A0A1W2PP97"/>
<dbReference type="VEuPathDB" id="HostDB:ENSG00000284491"/>
<dbReference type="GeneTree" id="ENSGT00870000137755"/>
<dbReference type="InParanoid" id="A0A1W2PP97"/>
<dbReference type="OMA" id="VFMDREN"/>
<dbReference type="OrthoDB" id="9835066at2759"/>
<dbReference type="PAN-GO" id="A0A1W2PP97">
    <property type="GO annotations" value="0 GO annotations based on evolutionary models"/>
</dbReference>
<dbReference type="Pharos" id="A0A1W2PP97">
    <property type="development level" value="Tdark"/>
</dbReference>
<dbReference type="PRO" id="PR:A0A1W2PP97"/>
<dbReference type="Proteomes" id="UP000005640">
    <property type="component" value="Chromosome 19"/>
</dbReference>
<dbReference type="Bgee" id="ENSG00000284491">
    <property type="expression patterns" value="Expressed in male germ line stem cell (sensu Vertebrata) in testis and 90 other cell types or tissues"/>
</dbReference>
<dbReference type="InterPro" id="IPR000884">
    <property type="entry name" value="TSP1_rpt"/>
</dbReference>
<dbReference type="InterPro" id="IPR036383">
    <property type="entry name" value="TSP1_rpt_sf"/>
</dbReference>
<dbReference type="SUPFAM" id="SSF82895">
    <property type="entry name" value="TSP-1 type 1 repeat"/>
    <property type="match status" value="1"/>
</dbReference>
<dbReference type="PROSITE" id="PS50092">
    <property type="entry name" value="TSP1"/>
    <property type="match status" value="1"/>
</dbReference>
<organism>
    <name type="scientific">Homo sapiens</name>
    <name type="common">Human</name>
    <dbReference type="NCBI Taxonomy" id="9606"/>
    <lineage>
        <taxon>Eukaryota</taxon>
        <taxon>Metazoa</taxon>
        <taxon>Chordata</taxon>
        <taxon>Craniata</taxon>
        <taxon>Vertebrata</taxon>
        <taxon>Euteleostomi</taxon>
        <taxon>Mammalia</taxon>
        <taxon>Eutheria</taxon>
        <taxon>Euarchontoglires</taxon>
        <taxon>Primates</taxon>
        <taxon>Haplorrhini</taxon>
        <taxon>Catarrhini</taxon>
        <taxon>Hominidae</taxon>
        <taxon>Homo</taxon>
    </lineage>
</organism>
<gene>
    <name evidence="4" type="primary">THSD8</name>
</gene>
<keyword id="KW-1185">Reference proteome</keyword>
<keyword id="KW-0732">Signal</keyword>
<evidence type="ECO:0000255" key="1"/>
<evidence type="ECO:0000255" key="2">
    <source>
        <dbReference type="PROSITE-ProRule" id="PRU00210"/>
    </source>
</evidence>
<evidence type="ECO:0000305" key="3"/>
<evidence type="ECO:0000312" key="4">
    <source>
        <dbReference type="HGNC" id="HGNC:53785"/>
    </source>
</evidence>
<accession>A0A1W2PP97</accession>
<accession>A0A1W2PP18</accession>
<name>THSD8_HUMAN</name>
<reference key="1">
    <citation type="journal article" date="2004" name="Nature">
        <title>The DNA sequence and biology of human chromosome 19.</title>
        <authorList>
            <person name="Grimwood J."/>
            <person name="Gordon L.A."/>
            <person name="Olsen A.S."/>
            <person name="Terry A."/>
            <person name="Schmutz J."/>
            <person name="Lamerdin J.E."/>
            <person name="Hellsten U."/>
            <person name="Goodstein D."/>
            <person name="Couronne O."/>
            <person name="Tran-Gyamfi M."/>
            <person name="Aerts A."/>
            <person name="Altherr M."/>
            <person name="Ashworth L."/>
            <person name="Bajorek E."/>
            <person name="Black S."/>
            <person name="Branscomb E."/>
            <person name="Caenepeel S."/>
            <person name="Carrano A.V."/>
            <person name="Caoile C."/>
            <person name="Chan Y.M."/>
            <person name="Christensen M."/>
            <person name="Cleland C.A."/>
            <person name="Copeland A."/>
            <person name="Dalin E."/>
            <person name="Dehal P."/>
            <person name="Denys M."/>
            <person name="Detter J.C."/>
            <person name="Escobar J."/>
            <person name="Flowers D."/>
            <person name="Fotopulos D."/>
            <person name="Garcia C."/>
            <person name="Georgescu A.M."/>
            <person name="Glavina T."/>
            <person name="Gomez M."/>
            <person name="Gonzales E."/>
            <person name="Groza M."/>
            <person name="Hammon N."/>
            <person name="Hawkins T."/>
            <person name="Haydu L."/>
            <person name="Ho I."/>
            <person name="Huang W."/>
            <person name="Israni S."/>
            <person name="Jett J."/>
            <person name="Kadner K."/>
            <person name="Kimball H."/>
            <person name="Kobayashi A."/>
            <person name="Larionov V."/>
            <person name="Leem S.-H."/>
            <person name="Lopez F."/>
            <person name="Lou Y."/>
            <person name="Lowry S."/>
            <person name="Malfatti S."/>
            <person name="Martinez D."/>
            <person name="McCready P.M."/>
            <person name="Medina C."/>
            <person name="Morgan J."/>
            <person name="Nelson K."/>
            <person name="Nolan M."/>
            <person name="Ovcharenko I."/>
            <person name="Pitluck S."/>
            <person name="Pollard M."/>
            <person name="Popkie A.P."/>
            <person name="Predki P."/>
            <person name="Quan G."/>
            <person name="Ramirez L."/>
            <person name="Rash S."/>
            <person name="Retterer J."/>
            <person name="Rodriguez A."/>
            <person name="Rogers S."/>
            <person name="Salamov A."/>
            <person name="Salazar A."/>
            <person name="She X."/>
            <person name="Smith D."/>
            <person name="Slezak T."/>
            <person name="Solovyev V."/>
            <person name="Thayer N."/>
            <person name="Tice H."/>
            <person name="Tsai M."/>
            <person name="Ustaszewska A."/>
            <person name="Vo N."/>
            <person name="Wagner M."/>
            <person name="Wheeler J."/>
            <person name="Wu K."/>
            <person name="Xie G."/>
            <person name="Yang J."/>
            <person name="Dubchak I."/>
            <person name="Furey T.S."/>
            <person name="DeJong P."/>
            <person name="Dickson M."/>
            <person name="Gordon D."/>
            <person name="Eichler E.E."/>
            <person name="Pennacchio L.A."/>
            <person name="Richardson P."/>
            <person name="Stubbs L."/>
            <person name="Rokhsar D.S."/>
            <person name="Myers R.M."/>
            <person name="Rubin E.M."/>
            <person name="Lucas S.M."/>
        </authorList>
    </citation>
    <scope>NUCLEOTIDE SEQUENCE [LARGE SCALE GENOMIC DNA]</scope>
</reference>
<proteinExistence type="inferred from homology"/>
<feature type="signal peptide" evidence="1">
    <location>
        <begin position="1"/>
        <end position="21"/>
    </location>
</feature>
<feature type="chain" id="PRO_0000444945" description="Thrombospondin type-1 domain-containing protein 8" evidence="1">
    <location>
        <begin position="22"/>
        <end position="115"/>
    </location>
</feature>
<feature type="domain" description="TSP type-1" evidence="2">
    <location>
        <begin position="53"/>
        <end position="104"/>
    </location>
</feature>